<protein>
    <recommendedName>
        <fullName>Dihydropyrimidinase-related protein 2</fullName>
        <shortName>DRP-2</shortName>
    </recommendedName>
    <alternativeName>
        <fullName>Unc-33-like phosphoprotein 2</fullName>
        <shortName>ULIP-2</shortName>
    </alternativeName>
</protein>
<comment type="function">
    <text evidence="8">Plays a role in neuronal development and polarity, as well as in axon growth and guidance, neuronal growth cone collapse and cell migration. Necessary for signaling by class 3 semaphorins and subsequent remodeling of the cytoskeleton. May play a role in endocytosis.</text>
</comment>
<comment type="subunit">
    <text evidence="6 7 9">Homotetramer, and heterotetramer with CRMP1, DPYSL3, DPYSL4 or DPYSL5. Interacts through its C-terminus with the C-terminus of CYFIP1/SRA1. Interacts with HTR4. Interacts with CLN6. Interacts with MICALL1.</text>
</comment>
<comment type="subcellular location">
    <subcellularLocation>
        <location evidence="1">Cytoplasm</location>
        <location evidence="1">Cytosol</location>
    </subcellularLocation>
    <subcellularLocation>
        <location evidence="1">Cytoplasm</location>
        <location evidence="1">Cytoskeleton</location>
    </subcellularLocation>
    <subcellularLocation>
        <location evidence="1">Membrane</location>
    </subcellularLocation>
    <text evidence="1">Tightly but non-covalently associated with membranes.</text>
</comment>
<comment type="PTM">
    <text evidence="1 8">Phosphorylation by DYRK2 at Ser-522 is required for subsequent phosphorylation by GSK3B (By similarity). Phosphorylation at Thr-514 by GSK3B abolishes tubulin-binding leading to destabilization of microtubule assembly in axons and neurodegeneration.</text>
</comment>
<comment type="similarity">
    <text evidence="10">Belongs to the metallo-dependent hydrolases superfamily. Hydantoinase/dihydropyrimidinase family.</text>
</comment>
<comment type="caution">
    <text evidence="10">Lacks most of the conserved residues that are essential for binding the metal cofactor and hence for dihydropyrimidinase activity. Its enzyme activity is therefore unsure.</text>
</comment>
<reference key="1">
    <citation type="journal article" date="1998" name="Eur. J. Biochem.">
        <title>The Ulip family phosphoproteins -- common and specific properties.</title>
        <authorList>
            <person name="Byk T."/>
            <person name="Ozon S."/>
            <person name="Sobel A."/>
        </authorList>
    </citation>
    <scope>NUCLEOTIDE SEQUENCE [MRNA]</scope>
    <source>
        <strain>ICR</strain>
        <tissue>Brain</tissue>
    </source>
</reference>
<reference key="2">
    <citation type="journal article" date="2004" name="Genome Res.">
        <title>The status, quality, and expansion of the NIH full-length cDNA project: the Mammalian Gene Collection (MGC).</title>
        <authorList>
            <consortium name="The MGC Project Team"/>
        </authorList>
    </citation>
    <scope>NUCLEOTIDE SEQUENCE [LARGE SCALE MRNA]</scope>
    <source>
        <strain>C57BL/6J</strain>
        <tissue>Brain</tissue>
    </source>
</reference>
<reference key="3">
    <citation type="submission" date="2009-01" db="UniProtKB">
        <authorList>
            <person name="Lubec G."/>
            <person name="Klug S."/>
            <person name="Kang S.U."/>
            <person name="Sunyer B."/>
            <person name="Chen W.-Q."/>
        </authorList>
    </citation>
    <scope>PROTEIN SEQUENCE OF 44-56; 174-211; 239-254; 259-268; 391-397; 441-467 AND 533-552</scope>
    <scope>IDENTIFICATION BY MASS SPECTROMETRY</scope>
    <source>
        <strain>C57BL/6J</strain>
        <strain>OF1</strain>
        <tissue>Brain</tissue>
        <tissue>Hippocampus</tissue>
    </source>
</reference>
<reference key="4">
    <citation type="journal article" date="1997" name="J. Neurochem.">
        <title>Brain CRMP forms heterotetramers similar to liver dihydropyrimidinase.</title>
        <authorList>
            <person name="Wang L.H."/>
            <person name="Strittmatter S.M."/>
        </authorList>
    </citation>
    <scope>SUBUNIT</scope>
</reference>
<reference key="5">
    <citation type="journal article" date="2000" name="J. Biol. Chem.">
        <title>Molecular characterization of CRMP5, a novel member of the collapsin response mediator protein family.</title>
        <authorList>
            <person name="Fukada M."/>
            <person name="Watakabe I."/>
            <person name="Yuasa-Kawada J."/>
            <person name="Kawachi H."/>
            <person name="Kuroiwa A."/>
            <person name="Matsuda Y."/>
            <person name="Noda M."/>
        </authorList>
    </citation>
    <scope>SUBUNIT</scope>
</reference>
<reference key="6">
    <citation type="journal article" date="2004" name="J. Cell Sci.">
        <title>New sorting nexin (SNX27) and NHERF specifically interact with the 5-HT4a receptor splice variant: roles in receptor targeting.</title>
        <authorList>
            <person name="Joubert L."/>
            <person name="Hanson B."/>
            <person name="Barthet G."/>
            <person name="Sebben M."/>
            <person name="Claeysen S."/>
            <person name="Hong W."/>
            <person name="Marin P."/>
            <person name="Dumuis A."/>
            <person name="Bockaert J."/>
        </authorList>
    </citation>
    <scope>INTERACTION WITH HTR4</scope>
</reference>
<reference key="7">
    <citation type="journal article" date="2004" name="Mol. Cell. Proteomics">
        <title>Phosphoproteomic analysis of the developing mouse brain.</title>
        <authorList>
            <person name="Ballif B.A."/>
            <person name="Villen J."/>
            <person name="Beausoleil S.A."/>
            <person name="Schwartz D."/>
            <person name="Gygi S.P."/>
        </authorList>
    </citation>
    <scope>IDENTIFICATION BY MASS SPECTROMETRY [LARGE SCALE ANALYSIS]</scope>
    <source>
        <tissue>Embryonic brain</tissue>
    </source>
</reference>
<reference key="8">
    <citation type="journal article" date="2005" name="Proteomics">
        <title>Quantitative analysis of both protein expression and serine / threonine post-translational modifications through stable isotope labeling with dithiothreitol.</title>
        <authorList>
            <person name="Vosseller K."/>
            <person name="Hansen K.C."/>
            <person name="Chalkley R.J."/>
            <person name="Trinidad J.C."/>
            <person name="Wells L."/>
            <person name="Hart G.W."/>
            <person name="Burlingame A.L."/>
        </authorList>
    </citation>
    <scope>PHOSPHORYLATION [LARGE SCALE ANALYSIS] AT SER-465</scope>
    <scope>IDENTIFICATION BY MASS SPECTROMETRY [LARGE SCALE ANALYSIS]</scope>
</reference>
<reference key="9">
    <citation type="journal article" date="2008" name="J. Proteome Res.">
        <title>Large-scale identification and evolution indexing of tyrosine phosphorylation sites from murine brain.</title>
        <authorList>
            <person name="Ballif B.A."/>
            <person name="Carey G.R."/>
            <person name="Sunyaev S.R."/>
            <person name="Gygi S.P."/>
        </authorList>
    </citation>
    <scope>PHOSPHORYLATION [LARGE SCALE ANALYSIS] AT TYR-431; TYR-499 AND THR-509</scope>
    <scope>IDENTIFICATION BY MASS SPECTROMETRY [LARGE SCALE ANALYSIS]</scope>
    <source>
        <tissue>Brain</tissue>
    </source>
</reference>
<reference key="10">
    <citation type="journal article" date="2009" name="Mol. Cell. Proteomics">
        <title>Large scale localization of protein phosphorylation by use of electron capture dissociation mass spectrometry.</title>
        <authorList>
            <person name="Sweet S.M."/>
            <person name="Bailey C.M."/>
            <person name="Cunningham D.L."/>
            <person name="Heath J.K."/>
            <person name="Cooper H.J."/>
        </authorList>
    </citation>
    <scope>PHOSPHORYLATION [LARGE SCALE ANALYSIS] AT THR-514; SER-517; SER-518 AND SER-522</scope>
    <scope>IDENTIFICATION BY MASS SPECTROMETRY [LARGE SCALE ANALYSIS]</scope>
    <source>
        <tissue>Embryonic fibroblast</tissue>
    </source>
</reference>
<reference key="11">
    <citation type="journal article" date="2010" name="Cell">
        <title>A tissue-specific atlas of mouse protein phosphorylation and expression.</title>
        <authorList>
            <person name="Huttlin E.L."/>
            <person name="Jedrychowski M.P."/>
            <person name="Elias J.E."/>
            <person name="Goswami T."/>
            <person name="Rad R."/>
            <person name="Beausoleil S.A."/>
            <person name="Villen J."/>
            <person name="Haas W."/>
            <person name="Sowa M.E."/>
            <person name="Gygi S.P."/>
        </authorList>
    </citation>
    <scope>PHOSPHORYLATION [LARGE SCALE ANALYSIS] AT SER-402; SER-507; THR-509; THR-512; THR-514; SER-517; SER-518; THR-521; SER-522; SER-537; SER-540 AND SER-542</scope>
    <scope>IDENTIFICATION BY MASS SPECTROMETRY [LARGE SCALE ANALYSIS]</scope>
    <source>
        <tissue>Brain</tissue>
        <tissue>Brown adipose tissue</tissue>
        <tissue>Heart</tissue>
        <tissue>Kidney</tissue>
        <tissue>Liver</tissue>
        <tissue>Lung</tissue>
        <tissue>Pancreas</tissue>
        <tissue>Spleen</tissue>
        <tissue>Testis</tissue>
    </source>
</reference>
<reference key="12">
    <citation type="journal article" date="2011" name="Nat. Cell Biol.">
        <title>ZNRF1 promotes Wallerian degeneration by degrading AKT to induce GSK3B-dependent CRMP2 phosphorylation.</title>
        <authorList>
            <person name="Wakatsuki S."/>
            <person name="Saitoh F."/>
            <person name="Araki T."/>
        </authorList>
    </citation>
    <scope>FUNCTION</scope>
    <scope>PHOSPHORYLATION AT THR-514</scope>
    <scope>MUTAGENESIS OF THR-514</scope>
</reference>
<reference key="13">
    <citation type="journal article" date="2013" name="Mol. Cell">
        <title>SIRT5-mediated lysine desuccinylation impacts diverse metabolic pathways.</title>
        <authorList>
            <person name="Park J."/>
            <person name="Chen Y."/>
            <person name="Tishkoff D.X."/>
            <person name="Peng C."/>
            <person name="Tan M."/>
            <person name="Dai L."/>
            <person name="Xie Z."/>
            <person name="Zhang Y."/>
            <person name="Zwaans B.M."/>
            <person name="Skinner M.E."/>
            <person name="Lombard D.B."/>
            <person name="Zhao Y."/>
        </authorList>
    </citation>
    <scope>SUCCINYLATION [LARGE SCALE ANALYSIS] AT LYS-258</scope>
    <scope>IDENTIFICATION BY MASS SPECTROMETRY [LARGE SCALE ANALYSIS]</scope>
    <source>
        <tissue>Embryonic fibroblast</tissue>
    </source>
</reference>
<reference key="14">
    <citation type="journal article" date="2014" name="Mol. Cell. Proteomics">
        <title>Immunoaffinity enrichment and mass spectrometry analysis of protein methylation.</title>
        <authorList>
            <person name="Guo A."/>
            <person name="Gu H."/>
            <person name="Zhou J."/>
            <person name="Mulhern D."/>
            <person name="Wang Y."/>
            <person name="Lee K.A."/>
            <person name="Yang V."/>
            <person name="Aguiar M."/>
            <person name="Kornhauser J."/>
            <person name="Jia X."/>
            <person name="Ren J."/>
            <person name="Beausoleil S.A."/>
            <person name="Silva J.C."/>
            <person name="Vemulapalli V."/>
            <person name="Bedford M.T."/>
            <person name="Comb M.J."/>
        </authorList>
    </citation>
    <scope>METHYLATION [LARGE SCALE ANALYSIS] AT ARG-565</scope>
    <scope>IDENTIFICATION BY MASS SPECTROMETRY [LARGE SCALE ANALYSIS]</scope>
    <source>
        <tissue>Brain</tissue>
    </source>
</reference>
<gene>
    <name type="primary">Dpysl2</name>
    <name type="synonym">Crmp2</name>
    <name type="synonym">Ulip2</name>
</gene>
<dbReference type="EMBL" id="Y10339">
    <property type="protein sequence ID" value="CAA71370.1"/>
    <property type="molecule type" value="mRNA"/>
</dbReference>
<dbReference type="EMBL" id="BC062955">
    <property type="protein sequence ID" value="AAH62955.1"/>
    <property type="molecule type" value="mRNA"/>
</dbReference>
<dbReference type="CCDS" id="CCDS27224.1"/>
<dbReference type="RefSeq" id="NP_034085.2">
    <property type="nucleotide sequence ID" value="NM_009955.3"/>
</dbReference>
<dbReference type="PDB" id="5UQC">
    <property type="method" value="X-ray"/>
    <property type="resolution" value="1.78 A"/>
    <property type="chains" value="A/B=15-496"/>
</dbReference>
<dbReference type="PDBsum" id="5UQC"/>
<dbReference type="SMR" id="O08553"/>
<dbReference type="BioGRID" id="198891">
    <property type="interactions" value="147"/>
</dbReference>
<dbReference type="CORUM" id="O08553"/>
<dbReference type="FunCoup" id="O08553">
    <property type="interactions" value="1559"/>
</dbReference>
<dbReference type="IntAct" id="O08553">
    <property type="interactions" value="30"/>
</dbReference>
<dbReference type="MINT" id="O08553"/>
<dbReference type="STRING" id="10090.ENSMUSP00000022629"/>
<dbReference type="ChEMBL" id="CHEMBL1075160"/>
<dbReference type="MEROPS" id="M38.975"/>
<dbReference type="GlyGen" id="O08553">
    <property type="glycosylation" value="14 sites, 4 N-linked glycans (4 sites), 1 O-linked glycan (6 sites)"/>
</dbReference>
<dbReference type="iPTMnet" id="O08553"/>
<dbReference type="PhosphoSitePlus" id="O08553"/>
<dbReference type="SwissPalm" id="O08553"/>
<dbReference type="REPRODUCTION-2DPAGE" id="IPI00114375"/>
<dbReference type="REPRODUCTION-2DPAGE" id="O08553"/>
<dbReference type="CPTAC" id="non-CPTAC-3426"/>
<dbReference type="CPTAC" id="non-CPTAC-3911"/>
<dbReference type="jPOST" id="O08553"/>
<dbReference type="PaxDb" id="10090-ENSMUSP00000022629"/>
<dbReference type="PeptideAtlas" id="O08553"/>
<dbReference type="ProteomicsDB" id="279482"/>
<dbReference type="Pumba" id="O08553"/>
<dbReference type="Antibodypedia" id="1039">
    <property type="antibodies" value="655 antibodies from 41 providers"/>
</dbReference>
<dbReference type="DNASU" id="12934"/>
<dbReference type="Ensembl" id="ENSMUST00000022629.9">
    <property type="protein sequence ID" value="ENSMUSP00000022629.9"/>
    <property type="gene ID" value="ENSMUSG00000022048.10"/>
</dbReference>
<dbReference type="GeneID" id="12934"/>
<dbReference type="KEGG" id="mmu:12934"/>
<dbReference type="UCSC" id="uc007uko.1">
    <property type="organism name" value="mouse"/>
</dbReference>
<dbReference type="AGR" id="MGI:1349763"/>
<dbReference type="CTD" id="1808"/>
<dbReference type="MGI" id="MGI:1349763">
    <property type="gene designation" value="Dpysl2"/>
</dbReference>
<dbReference type="VEuPathDB" id="HostDB:ENSMUSG00000022048"/>
<dbReference type="eggNOG" id="KOG2584">
    <property type="taxonomic scope" value="Eukaryota"/>
</dbReference>
<dbReference type="GeneTree" id="ENSGT01030000234527"/>
<dbReference type="HOGENOM" id="CLU_015572_2_2_1"/>
<dbReference type="InParanoid" id="O08553"/>
<dbReference type="OMA" id="EYTPFEG"/>
<dbReference type="OrthoDB" id="10258955at2759"/>
<dbReference type="PhylomeDB" id="O08553"/>
<dbReference type="TreeFam" id="TF314706"/>
<dbReference type="Reactome" id="R-MMU-399956">
    <property type="pathway name" value="CRMPs in Sema3A signaling"/>
</dbReference>
<dbReference type="Reactome" id="R-MMU-437239">
    <property type="pathway name" value="Recycling pathway of L1"/>
</dbReference>
<dbReference type="BioGRID-ORCS" id="12934">
    <property type="hits" value="1 hit in 78 CRISPR screens"/>
</dbReference>
<dbReference type="CD-CODE" id="01CA17F3">
    <property type="entry name" value="Centrosome"/>
</dbReference>
<dbReference type="CD-CODE" id="CE726F99">
    <property type="entry name" value="Postsynaptic density"/>
</dbReference>
<dbReference type="ChiTaRS" id="Dpysl2">
    <property type="organism name" value="mouse"/>
</dbReference>
<dbReference type="PRO" id="PR:O08553"/>
<dbReference type="Proteomes" id="UP000000589">
    <property type="component" value="Chromosome 14"/>
</dbReference>
<dbReference type="RNAct" id="O08553">
    <property type="molecule type" value="protein"/>
</dbReference>
<dbReference type="Bgee" id="ENSMUSG00000022048">
    <property type="expression patterns" value="Expressed in medial preoptic region and 223 other cell types or tissues"/>
</dbReference>
<dbReference type="GO" id="GO:0030424">
    <property type="term" value="C:axon"/>
    <property type="evidence" value="ECO:0000314"/>
    <property type="project" value="MGI"/>
</dbReference>
<dbReference type="GO" id="GO:0005929">
    <property type="term" value="C:cilium"/>
    <property type="evidence" value="ECO:0007669"/>
    <property type="project" value="Ensembl"/>
</dbReference>
<dbReference type="GO" id="GO:0005829">
    <property type="term" value="C:cytosol"/>
    <property type="evidence" value="ECO:0000250"/>
    <property type="project" value="UniProtKB"/>
</dbReference>
<dbReference type="GO" id="GO:0030425">
    <property type="term" value="C:dendrite"/>
    <property type="evidence" value="ECO:0000314"/>
    <property type="project" value="MGI"/>
</dbReference>
<dbReference type="GO" id="GO:0005739">
    <property type="term" value="C:mitochondrion"/>
    <property type="evidence" value="ECO:0007005"/>
    <property type="project" value="MGI"/>
</dbReference>
<dbReference type="GO" id="GO:0072686">
    <property type="term" value="C:mitotic spindle"/>
    <property type="evidence" value="ECO:0007669"/>
    <property type="project" value="Ensembl"/>
</dbReference>
<dbReference type="GO" id="GO:0043209">
    <property type="term" value="C:myelin sheath"/>
    <property type="evidence" value="ECO:0007005"/>
    <property type="project" value="UniProtKB"/>
</dbReference>
<dbReference type="GO" id="GO:0043025">
    <property type="term" value="C:neuronal cell body"/>
    <property type="evidence" value="ECO:0000314"/>
    <property type="project" value="MGI"/>
</dbReference>
<dbReference type="GO" id="GO:0005886">
    <property type="term" value="C:plasma membrane"/>
    <property type="evidence" value="ECO:0007669"/>
    <property type="project" value="Ensembl"/>
</dbReference>
<dbReference type="GO" id="GO:0014069">
    <property type="term" value="C:postsynaptic density"/>
    <property type="evidence" value="ECO:0000314"/>
    <property type="project" value="SynGO"/>
</dbReference>
<dbReference type="GO" id="GO:0098685">
    <property type="term" value="C:Schaffer collateral - CA1 synapse"/>
    <property type="evidence" value="ECO:0000314"/>
    <property type="project" value="SynGO"/>
</dbReference>
<dbReference type="GO" id="GO:0016810">
    <property type="term" value="F:hydrolase activity, acting on carbon-nitrogen (but not peptide) bonds"/>
    <property type="evidence" value="ECO:0007669"/>
    <property type="project" value="InterPro"/>
</dbReference>
<dbReference type="GO" id="GO:0019901">
    <property type="term" value="F:protein kinase binding"/>
    <property type="evidence" value="ECO:0000353"/>
    <property type="project" value="UniProtKB"/>
</dbReference>
<dbReference type="GO" id="GO:0030154">
    <property type="term" value="P:cell differentiation"/>
    <property type="evidence" value="ECO:0007669"/>
    <property type="project" value="UniProtKB-KW"/>
</dbReference>
<dbReference type="GO" id="GO:0007010">
    <property type="term" value="P:cytoskeleton organization"/>
    <property type="evidence" value="ECO:0000314"/>
    <property type="project" value="UniProtKB"/>
</dbReference>
<dbReference type="GO" id="GO:0006897">
    <property type="term" value="P:endocytosis"/>
    <property type="evidence" value="ECO:0000250"/>
    <property type="project" value="UniProtKB"/>
</dbReference>
<dbReference type="GO" id="GO:0007399">
    <property type="term" value="P:nervous system development"/>
    <property type="evidence" value="ECO:0007669"/>
    <property type="project" value="UniProtKB-KW"/>
</dbReference>
<dbReference type="GO" id="GO:0010975">
    <property type="term" value="P:regulation of neuron projection development"/>
    <property type="evidence" value="ECO:0000316"/>
    <property type="project" value="MGI"/>
</dbReference>
<dbReference type="CDD" id="cd01314">
    <property type="entry name" value="D-HYD"/>
    <property type="match status" value="1"/>
</dbReference>
<dbReference type="FunFam" id="2.30.40.10:FF:000021">
    <property type="entry name" value="Dihydropyrimidinase-related protein 2"/>
    <property type="match status" value="1"/>
</dbReference>
<dbReference type="FunFam" id="2.30.40.10:FF:000022">
    <property type="entry name" value="Dihydropyrimidinase-related protein 2"/>
    <property type="match status" value="1"/>
</dbReference>
<dbReference type="FunFam" id="3.20.20.140:FF:000174">
    <property type="entry name" value="Dihydropyrimidinase-related protein 2"/>
    <property type="match status" value="1"/>
</dbReference>
<dbReference type="Gene3D" id="3.20.20.140">
    <property type="entry name" value="Metal-dependent hydrolases"/>
    <property type="match status" value="1"/>
</dbReference>
<dbReference type="Gene3D" id="2.30.40.10">
    <property type="entry name" value="Urease, subunit C, domain 1"/>
    <property type="match status" value="1"/>
</dbReference>
<dbReference type="InterPro" id="IPR006680">
    <property type="entry name" value="Amidohydro-rel"/>
</dbReference>
<dbReference type="InterPro" id="IPR011778">
    <property type="entry name" value="Hydantoinase/dihydroPyrase"/>
</dbReference>
<dbReference type="InterPro" id="IPR011059">
    <property type="entry name" value="Metal-dep_hydrolase_composite"/>
</dbReference>
<dbReference type="InterPro" id="IPR032466">
    <property type="entry name" value="Metal_Hydrolase"/>
</dbReference>
<dbReference type="InterPro" id="IPR050378">
    <property type="entry name" value="Metallo-dep_Hydrolases_sf"/>
</dbReference>
<dbReference type="NCBIfam" id="TIGR02033">
    <property type="entry name" value="D-hydantoinase"/>
    <property type="match status" value="1"/>
</dbReference>
<dbReference type="PANTHER" id="PTHR11647:SF56">
    <property type="entry name" value="DIHYDROPYRIMIDINASE-RELATED PROTEIN 2"/>
    <property type="match status" value="1"/>
</dbReference>
<dbReference type="PANTHER" id="PTHR11647">
    <property type="entry name" value="HYDRANTOINASE/DIHYDROPYRIMIDINASE FAMILY MEMBER"/>
    <property type="match status" value="1"/>
</dbReference>
<dbReference type="Pfam" id="PF01979">
    <property type="entry name" value="Amidohydro_1"/>
    <property type="match status" value="1"/>
</dbReference>
<dbReference type="SUPFAM" id="SSF51338">
    <property type="entry name" value="Composite domain of metallo-dependent hydrolases"/>
    <property type="match status" value="2"/>
</dbReference>
<dbReference type="SUPFAM" id="SSF51556">
    <property type="entry name" value="Metallo-dependent hydrolases"/>
    <property type="match status" value="1"/>
</dbReference>
<accession>O08553</accession>
<accession>Q6P5D0</accession>
<proteinExistence type="evidence at protein level"/>
<name>DPYL2_MOUSE</name>
<evidence type="ECO:0000250" key="1"/>
<evidence type="ECO:0000250" key="2">
    <source>
        <dbReference type="UniProtKB" id="O02675"/>
    </source>
</evidence>
<evidence type="ECO:0000250" key="3">
    <source>
        <dbReference type="UniProtKB" id="P47942"/>
    </source>
</evidence>
<evidence type="ECO:0000250" key="4">
    <source>
        <dbReference type="UniProtKB" id="Q16555"/>
    </source>
</evidence>
<evidence type="ECO:0000256" key="5">
    <source>
        <dbReference type="SAM" id="MobiDB-lite"/>
    </source>
</evidence>
<evidence type="ECO:0000269" key="6">
    <source>
    </source>
</evidence>
<evidence type="ECO:0000269" key="7">
    <source>
    </source>
</evidence>
<evidence type="ECO:0000269" key="8">
    <source>
    </source>
</evidence>
<evidence type="ECO:0000269" key="9">
    <source>
    </source>
</evidence>
<evidence type="ECO:0000305" key="10"/>
<evidence type="ECO:0007744" key="11">
    <source>
    </source>
</evidence>
<evidence type="ECO:0007744" key="12">
    <source>
    </source>
</evidence>
<evidence type="ECO:0007744" key="13">
    <source>
    </source>
</evidence>
<evidence type="ECO:0007744" key="14">
    <source>
    </source>
</evidence>
<evidence type="ECO:0007744" key="15">
    <source>
    </source>
</evidence>
<evidence type="ECO:0007744" key="16">
    <source>
    </source>
</evidence>
<evidence type="ECO:0007829" key="17">
    <source>
        <dbReference type="PDB" id="5UQC"/>
    </source>
</evidence>
<sequence>MSYQGKKNIPRITSDRLLIKGGKIVNDDQSFYADIYMEDGLIKQIGENLIVPGGVKTIEAHSRMVIPGGIDVHTRFQMPDQGMTSADDFFQGTKAALAGGTTMIIDHVVPEPGTSLLAAFDQWREWADSKSCCDYSLHVDITEWHKGIQEEMEALVKDHGVNSFLVYMAFKDRFQLTDSQIYEVLSVIRDIGAIAQVHAENGDIIAEEQQRILDLGITGPEGHVLSRPEEVEAEAVNRSITIANQTNCPLYVTKVMSKSAAEVIAQARKKGTVVYGEPITASLGTDGSHYWSKNWAKAAAFVTSPPLSPDPTTPDFLNSLLSCGDLQVTGSAHCTFNTAQKAVGKDNFTLIPEGTNGTEERMSVIWDKAVVTGKMDENQFVAVTSTNAAKVFNLYPRKGRISVGSDADLVIWDPDSVKTISAKTHNSALEYNIFEGMECRGSPLVVISQGKIVLEDGTLHVTEGSGRYIPRKPFPDFVYKRIKARSRLAELRGVPRGLYDGPVCEVSVTPKTVTPASSAKTSPAKQQAPPVRNLHQSGFSLSGAQIDDNIPRRTTQRIVAPPGGRANITSLG</sequence>
<organism>
    <name type="scientific">Mus musculus</name>
    <name type="common">Mouse</name>
    <dbReference type="NCBI Taxonomy" id="10090"/>
    <lineage>
        <taxon>Eukaryota</taxon>
        <taxon>Metazoa</taxon>
        <taxon>Chordata</taxon>
        <taxon>Craniata</taxon>
        <taxon>Vertebrata</taxon>
        <taxon>Euteleostomi</taxon>
        <taxon>Mammalia</taxon>
        <taxon>Eutheria</taxon>
        <taxon>Euarchontoglires</taxon>
        <taxon>Glires</taxon>
        <taxon>Rodentia</taxon>
        <taxon>Myomorpha</taxon>
        <taxon>Muroidea</taxon>
        <taxon>Muridae</taxon>
        <taxon>Murinae</taxon>
        <taxon>Mus</taxon>
        <taxon>Mus</taxon>
    </lineage>
</organism>
<feature type="chain" id="PRO_0000165914" description="Dihydropyrimidinase-related protein 2">
    <location>
        <begin position="1"/>
        <end position="572"/>
    </location>
</feature>
<feature type="region of interest" description="Disordered" evidence="5">
    <location>
        <begin position="512"/>
        <end position="572"/>
    </location>
</feature>
<feature type="compositionally biased region" description="Polar residues" evidence="5">
    <location>
        <begin position="512"/>
        <end position="525"/>
    </location>
</feature>
<feature type="compositionally biased region" description="Polar residues" evidence="5">
    <location>
        <begin position="534"/>
        <end position="543"/>
    </location>
</feature>
<feature type="modified residue" description="Phosphotyrosine; by FYN" evidence="4">
    <location>
        <position position="32"/>
    </location>
</feature>
<feature type="modified residue" description="N6-succinyllysine" evidence="15">
    <location>
        <position position="258"/>
    </location>
</feature>
<feature type="modified residue" description="Phosphoserine" evidence="3">
    <location>
        <position position="259"/>
    </location>
</feature>
<feature type="modified residue" description="Phosphoserine" evidence="14">
    <location>
        <position position="402"/>
    </location>
</feature>
<feature type="modified residue" description="Phosphotyrosine" evidence="12">
    <location>
        <position position="431"/>
    </location>
</feature>
<feature type="modified residue" description="Phosphoserine" evidence="11">
    <location>
        <position position="465"/>
    </location>
</feature>
<feature type="modified residue" description="Phosphotyrosine" evidence="12">
    <location>
        <position position="499"/>
    </location>
</feature>
<feature type="modified residue" description="S-nitrosocysteine" evidence="3">
    <location>
        <position position="504"/>
    </location>
</feature>
<feature type="modified residue" description="Phosphoserine" evidence="14">
    <location>
        <position position="507"/>
    </location>
</feature>
<feature type="modified residue" description="Phosphothreonine" evidence="12 14">
    <location>
        <position position="509"/>
    </location>
</feature>
<feature type="modified residue" description="Phosphothreonine" evidence="14">
    <location>
        <position position="512"/>
    </location>
</feature>
<feature type="modified residue" description="Phosphothreonine; by GSK3-beta" evidence="8 13 14">
    <location>
        <position position="514"/>
    </location>
</feature>
<feature type="modified residue" description="Phosphoserine" evidence="13 14">
    <location>
        <position position="517"/>
    </location>
</feature>
<feature type="modified residue" description="Phosphoserine" evidence="13 14">
    <location>
        <position position="518"/>
    </location>
</feature>
<feature type="modified residue" description="Phosphothreonine" evidence="14">
    <location>
        <position position="521"/>
    </location>
</feature>
<feature type="modified residue" description="Phosphoserine" evidence="13 14">
    <location>
        <position position="522"/>
    </location>
</feature>
<feature type="modified residue" description="Phosphoserine" evidence="14">
    <location>
        <position position="537"/>
    </location>
</feature>
<feature type="modified residue" description="Phosphoserine" evidence="14">
    <location>
        <position position="540"/>
    </location>
</feature>
<feature type="modified residue" description="Phosphoserine" evidence="14">
    <location>
        <position position="542"/>
    </location>
</feature>
<feature type="modified residue" description="Phosphothreonine; by ROCK2" evidence="2">
    <location>
        <position position="555"/>
    </location>
</feature>
<feature type="modified residue" description="Asymmetric dimethylarginine" evidence="16">
    <location>
        <position position="565"/>
    </location>
</feature>
<feature type="mutagenesis site" description="Delayed neurite degeneration." evidence="8">
    <original>T</original>
    <variation>A</variation>
    <location>
        <position position="514"/>
    </location>
</feature>
<feature type="sequence conflict" description="In Ref. 1; CAA71370." evidence="10" ref="1">
    <original>R</original>
    <variation>P</variation>
    <location>
        <position position="11"/>
    </location>
</feature>
<feature type="sequence conflict" description="In Ref. 1; CAA71370." evidence="10" ref="1">
    <original>E</original>
    <variation>A</variation>
    <location>
        <position position="208"/>
    </location>
</feature>
<feature type="sequence conflict" description="In Ref. 1; CAA71370." evidence="10" ref="1">
    <original>S</original>
    <variation>P</variation>
    <location>
        <position position="257"/>
    </location>
</feature>
<feature type="strand" evidence="17">
    <location>
        <begin position="17"/>
        <end position="25"/>
    </location>
</feature>
<feature type="strand" evidence="17">
    <location>
        <begin position="30"/>
        <end position="38"/>
    </location>
</feature>
<feature type="strand" evidence="17">
    <location>
        <begin position="41"/>
        <end position="48"/>
    </location>
</feature>
<feature type="strand" evidence="17">
    <location>
        <begin position="56"/>
        <end position="59"/>
    </location>
</feature>
<feature type="strand" evidence="17">
    <location>
        <begin position="64"/>
        <end position="67"/>
    </location>
</feature>
<feature type="strand" evidence="17">
    <location>
        <begin position="69"/>
        <end position="72"/>
    </location>
</feature>
<feature type="helix" evidence="17">
    <location>
        <begin position="89"/>
        <end position="98"/>
    </location>
</feature>
<feature type="strand" evidence="17">
    <location>
        <begin position="101"/>
        <end position="108"/>
    </location>
</feature>
<feature type="helix" evidence="17">
    <location>
        <begin position="116"/>
        <end position="130"/>
    </location>
</feature>
<feature type="strand" evidence="17">
    <location>
        <begin position="132"/>
        <end position="140"/>
    </location>
</feature>
<feature type="helix" evidence="17">
    <location>
        <begin position="148"/>
        <end position="158"/>
    </location>
</feature>
<feature type="strand" evidence="17">
    <location>
        <begin position="163"/>
        <end position="170"/>
    </location>
</feature>
<feature type="turn" evidence="17">
    <location>
        <begin position="171"/>
        <end position="174"/>
    </location>
</feature>
<feature type="helix" evidence="17">
    <location>
        <begin position="178"/>
        <end position="191"/>
    </location>
</feature>
<feature type="strand" evidence="17">
    <location>
        <begin position="194"/>
        <end position="198"/>
    </location>
</feature>
<feature type="helix" evidence="17">
    <location>
        <begin position="202"/>
        <end position="214"/>
    </location>
</feature>
<feature type="helix" evidence="17">
    <location>
        <begin position="221"/>
        <end position="225"/>
    </location>
</feature>
<feature type="helix" evidence="17">
    <location>
        <begin position="229"/>
        <end position="246"/>
    </location>
</feature>
<feature type="strand" evidence="17">
    <location>
        <begin position="250"/>
        <end position="255"/>
    </location>
</feature>
<feature type="helix" evidence="17">
    <location>
        <begin position="258"/>
        <end position="270"/>
    </location>
</feature>
<feature type="strand" evidence="17">
    <location>
        <begin position="274"/>
        <end position="279"/>
    </location>
</feature>
<feature type="helix" evidence="17">
    <location>
        <begin position="280"/>
        <end position="284"/>
    </location>
</feature>
<feature type="helix" evidence="17">
    <location>
        <begin position="287"/>
        <end position="291"/>
    </location>
</feature>
<feature type="helix" evidence="17">
    <location>
        <begin position="295"/>
        <end position="300"/>
    </location>
</feature>
<feature type="helix" evidence="17">
    <location>
        <begin position="313"/>
        <end position="322"/>
    </location>
</feature>
<feature type="helix" evidence="17">
    <location>
        <begin position="338"/>
        <end position="341"/>
    </location>
</feature>
<feature type="helix" evidence="17">
    <location>
        <begin position="342"/>
        <end position="344"/>
    </location>
</feature>
<feature type="helix" evidence="17">
    <location>
        <begin position="348"/>
        <end position="350"/>
    </location>
</feature>
<feature type="turn" evidence="17">
    <location>
        <begin position="358"/>
        <end position="360"/>
    </location>
</feature>
<feature type="helix" evidence="17">
    <location>
        <begin position="361"/>
        <end position="369"/>
    </location>
</feature>
<feature type="turn" evidence="17">
    <location>
        <begin position="370"/>
        <end position="373"/>
    </location>
</feature>
<feature type="helix" evidence="17">
    <location>
        <begin position="377"/>
        <end position="384"/>
    </location>
</feature>
<feature type="helix" evidence="17">
    <location>
        <begin position="386"/>
        <end position="391"/>
    </location>
</feature>
<feature type="turn" evidence="17">
    <location>
        <begin position="395"/>
        <end position="397"/>
    </location>
</feature>
<feature type="strand" evidence="17">
    <location>
        <begin position="409"/>
        <end position="419"/>
    </location>
</feature>
<feature type="turn" evidence="17">
    <location>
        <begin position="422"/>
        <end position="424"/>
    </location>
</feature>
<feature type="strand" evidence="17">
    <location>
        <begin position="426"/>
        <end position="428"/>
    </location>
</feature>
<feature type="turn" evidence="17">
    <location>
        <begin position="433"/>
        <end position="436"/>
    </location>
</feature>
<feature type="strand" evidence="17">
    <location>
        <begin position="438"/>
        <end position="448"/>
    </location>
</feature>
<feature type="strand" evidence="17">
    <location>
        <begin position="451"/>
        <end position="455"/>
    </location>
</feature>
<feature type="helix" evidence="17">
    <location>
        <begin position="476"/>
        <end position="488"/>
    </location>
</feature>
<keyword id="KW-0002">3D-structure</keyword>
<keyword id="KW-0963">Cytoplasm</keyword>
<keyword id="KW-0206">Cytoskeleton</keyword>
<keyword id="KW-0217">Developmental protein</keyword>
<keyword id="KW-0221">Differentiation</keyword>
<keyword id="KW-0903">Direct protein sequencing</keyword>
<keyword id="KW-0472">Membrane</keyword>
<keyword id="KW-0488">Methylation</keyword>
<keyword id="KW-0524">Neurogenesis</keyword>
<keyword id="KW-0597">Phosphoprotein</keyword>
<keyword id="KW-1185">Reference proteome</keyword>
<keyword id="KW-0702">S-nitrosylation</keyword>